<evidence type="ECO:0000255" key="1">
    <source>
        <dbReference type="HAMAP-Rule" id="MF_03147"/>
    </source>
</evidence>
<keyword id="KW-0067">ATP-binding</keyword>
<keyword id="KW-0436">Ligase</keyword>
<keyword id="KW-0496">Mitochondrion</keyword>
<keyword id="KW-0547">Nucleotide-binding</keyword>
<keyword id="KW-0648">Protein biosynthesis</keyword>
<keyword id="KW-1185">Reference proteome</keyword>
<sequence>MFIRRLHKFSYNPQYKLKCGLEIHTQLKTKYKLFSLSPTSYNEPANTKLSYFDVGLPGTQPKLNPEALLLALRASVAFNSEIQPYSSFDRKHYFYPDQPLGYQITQHYYPLAKNGYLELNKYDNIKDKRIRLEQIQLEQDTGKTVNYDDRINVDYNRANTPLIEVVTKPDFENIEQVQAFVRKYQLIVSHLDICTGELETGAMRVDANISVNGNPRVEIKNLGSSGEIVDALQFEYMRQVRLLQNGQGINQETRGWTGEGTESLRSKENAVDYRYVPDSELPAIRLDQQITKQLQKSLPELPDTILERLINKPYNLDLAHAKNLLYQPEVLKYYETIFASISSNANKWFFQELLAAFAKRGVEFDVDIVPPSMLVDIVKKVETEEISLAAARIILKYIVENKSTNTLVELVEILDLKKPEANDELQLAVKEICQQIIKNNPEVVTKIANGHKNALQVLIGQAMKATKGKVHAKDFKEQFIELLK</sequence>
<gene>
    <name evidence="1" type="primary">PET112</name>
    <name type="ORF">CTRG_04807</name>
</gene>
<name>GATB_CANTT</name>
<feature type="chain" id="PRO_0000413253" description="Glutamyl-tRNA(Gln) amidotransferase subunit B, mitochondrial">
    <location>
        <begin position="1"/>
        <end position="484"/>
    </location>
</feature>
<reference key="1">
    <citation type="journal article" date="2009" name="Nature">
        <title>Evolution of pathogenicity and sexual reproduction in eight Candida genomes.</title>
        <authorList>
            <person name="Butler G."/>
            <person name="Rasmussen M.D."/>
            <person name="Lin M.F."/>
            <person name="Santos M.A.S."/>
            <person name="Sakthikumar S."/>
            <person name="Munro C.A."/>
            <person name="Rheinbay E."/>
            <person name="Grabherr M."/>
            <person name="Forche A."/>
            <person name="Reedy J.L."/>
            <person name="Agrafioti I."/>
            <person name="Arnaud M.B."/>
            <person name="Bates S."/>
            <person name="Brown A.J.P."/>
            <person name="Brunke S."/>
            <person name="Costanzo M.C."/>
            <person name="Fitzpatrick D.A."/>
            <person name="de Groot P.W.J."/>
            <person name="Harris D."/>
            <person name="Hoyer L.L."/>
            <person name="Hube B."/>
            <person name="Klis F.M."/>
            <person name="Kodira C."/>
            <person name="Lennard N."/>
            <person name="Logue M.E."/>
            <person name="Martin R."/>
            <person name="Neiman A.M."/>
            <person name="Nikolaou E."/>
            <person name="Quail M.A."/>
            <person name="Quinn J."/>
            <person name="Santos M.C."/>
            <person name="Schmitzberger F.F."/>
            <person name="Sherlock G."/>
            <person name="Shah P."/>
            <person name="Silverstein K.A.T."/>
            <person name="Skrzypek M.S."/>
            <person name="Soll D."/>
            <person name="Staggs R."/>
            <person name="Stansfield I."/>
            <person name="Stumpf M.P.H."/>
            <person name="Sudbery P.E."/>
            <person name="Srikantha T."/>
            <person name="Zeng Q."/>
            <person name="Berman J."/>
            <person name="Berriman M."/>
            <person name="Heitman J."/>
            <person name="Gow N.A.R."/>
            <person name="Lorenz M.C."/>
            <person name="Birren B.W."/>
            <person name="Kellis M."/>
            <person name="Cuomo C.A."/>
        </authorList>
    </citation>
    <scope>NUCLEOTIDE SEQUENCE [LARGE SCALE GENOMIC DNA]</scope>
    <source>
        <strain>ATCC MYA-3404 / T1</strain>
    </source>
</reference>
<accession>C5MFG4</accession>
<organism>
    <name type="scientific">Candida tropicalis (strain ATCC MYA-3404 / T1)</name>
    <name type="common">Yeast</name>
    <dbReference type="NCBI Taxonomy" id="294747"/>
    <lineage>
        <taxon>Eukaryota</taxon>
        <taxon>Fungi</taxon>
        <taxon>Dikarya</taxon>
        <taxon>Ascomycota</taxon>
        <taxon>Saccharomycotina</taxon>
        <taxon>Pichiomycetes</taxon>
        <taxon>Debaryomycetaceae</taxon>
        <taxon>Candida/Lodderomyces clade</taxon>
        <taxon>Candida</taxon>
    </lineage>
</organism>
<comment type="function">
    <text evidence="1">Allows the formation of correctly charged Gln-tRNA(Gln) through the transamidation of misacylated Glu-tRNA(Gln) in the mitochondria. The reaction takes place in the presence of glutamine and ATP through an activated gamma-phospho-Glu-tRNA(Gln).</text>
</comment>
<comment type="catalytic activity">
    <reaction evidence="1">
        <text>L-glutamyl-tRNA(Gln) + L-glutamine + ATP + H2O = L-glutaminyl-tRNA(Gln) + L-glutamate + ADP + phosphate + H(+)</text>
        <dbReference type="Rhea" id="RHEA:17521"/>
        <dbReference type="Rhea" id="RHEA-COMP:9681"/>
        <dbReference type="Rhea" id="RHEA-COMP:9684"/>
        <dbReference type="ChEBI" id="CHEBI:15377"/>
        <dbReference type="ChEBI" id="CHEBI:15378"/>
        <dbReference type="ChEBI" id="CHEBI:29985"/>
        <dbReference type="ChEBI" id="CHEBI:30616"/>
        <dbReference type="ChEBI" id="CHEBI:43474"/>
        <dbReference type="ChEBI" id="CHEBI:58359"/>
        <dbReference type="ChEBI" id="CHEBI:78520"/>
        <dbReference type="ChEBI" id="CHEBI:78521"/>
        <dbReference type="ChEBI" id="CHEBI:456216"/>
    </reaction>
</comment>
<comment type="subunit">
    <text evidence="1">Subunit of the heterotrimeric GatFAB amidotransferase (AdT) complex, composed of A, B and F subunits.</text>
</comment>
<comment type="subcellular location">
    <subcellularLocation>
        <location evidence="1">Mitochondrion</location>
    </subcellularLocation>
</comment>
<comment type="miscellaneous">
    <text evidence="1">This protein may be expected to contain an N-terminal transit peptide but none has been predicted.</text>
</comment>
<comment type="similarity">
    <text evidence="1">Belongs to the GatB/GatE family. GatB subfamily.</text>
</comment>
<proteinExistence type="inferred from homology"/>
<dbReference type="EC" id="6.3.5.-" evidence="1"/>
<dbReference type="EMBL" id="GG692400">
    <property type="protein sequence ID" value="EER32024.1"/>
    <property type="molecule type" value="Genomic_DNA"/>
</dbReference>
<dbReference type="RefSeq" id="XP_002550509.1">
    <property type="nucleotide sequence ID" value="XM_002550463.1"/>
</dbReference>
<dbReference type="SMR" id="C5MFG4"/>
<dbReference type="STRING" id="294747.C5MFG4"/>
<dbReference type="EnsemblFungi" id="CTRG_04807-t43_1">
    <property type="protein sequence ID" value="CTRG_04807-t43_1-p1"/>
    <property type="gene ID" value="CTRG_04807"/>
</dbReference>
<dbReference type="GeneID" id="8296518"/>
<dbReference type="KEGG" id="ctp:CTRG_04807"/>
<dbReference type="VEuPathDB" id="FungiDB:CTRG_04807"/>
<dbReference type="eggNOG" id="KOG2438">
    <property type="taxonomic scope" value="Eukaryota"/>
</dbReference>
<dbReference type="HOGENOM" id="CLU_019240_4_0_1"/>
<dbReference type="OrthoDB" id="1722066at2759"/>
<dbReference type="Proteomes" id="UP000002037">
    <property type="component" value="Unassembled WGS sequence"/>
</dbReference>
<dbReference type="GO" id="GO:0030956">
    <property type="term" value="C:glutamyl-tRNA(Gln) amidotransferase complex"/>
    <property type="evidence" value="ECO:0007669"/>
    <property type="project" value="UniProtKB-UniRule"/>
</dbReference>
<dbReference type="GO" id="GO:0005739">
    <property type="term" value="C:mitochondrion"/>
    <property type="evidence" value="ECO:0007669"/>
    <property type="project" value="UniProtKB-SubCell"/>
</dbReference>
<dbReference type="GO" id="GO:0005524">
    <property type="term" value="F:ATP binding"/>
    <property type="evidence" value="ECO:0007669"/>
    <property type="project" value="UniProtKB-KW"/>
</dbReference>
<dbReference type="GO" id="GO:0050567">
    <property type="term" value="F:glutaminyl-tRNA synthase (glutamine-hydrolyzing) activity"/>
    <property type="evidence" value="ECO:0007669"/>
    <property type="project" value="UniProtKB-UniRule"/>
</dbReference>
<dbReference type="GO" id="GO:0070681">
    <property type="term" value="P:glutaminyl-tRNAGln biosynthesis via transamidation"/>
    <property type="evidence" value="ECO:0007669"/>
    <property type="project" value="UniProtKB-UniRule"/>
</dbReference>
<dbReference type="GO" id="GO:0032543">
    <property type="term" value="P:mitochondrial translation"/>
    <property type="evidence" value="ECO:0007669"/>
    <property type="project" value="UniProtKB-UniRule"/>
</dbReference>
<dbReference type="Gene3D" id="1.10.10.410">
    <property type="match status" value="1"/>
</dbReference>
<dbReference type="HAMAP" id="MF_00121">
    <property type="entry name" value="GatB"/>
    <property type="match status" value="1"/>
</dbReference>
<dbReference type="InterPro" id="IPR017959">
    <property type="entry name" value="Asn/Gln-tRNA_amidoTrfase_suB/E"/>
</dbReference>
<dbReference type="InterPro" id="IPR006075">
    <property type="entry name" value="Asn/Gln-tRNA_Trfase_suB/E_cat"/>
</dbReference>
<dbReference type="InterPro" id="IPR018027">
    <property type="entry name" value="Asn/Gln_amidotransferase"/>
</dbReference>
<dbReference type="InterPro" id="IPR003789">
    <property type="entry name" value="Asn/Gln_tRNA_amidoTrase-B-like"/>
</dbReference>
<dbReference type="InterPro" id="IPR004413">
    <property type="entry name" value="GatB"/>
</dbReference>
<dbReference type="InterPro" id="IPR023168">
    <property type="entry name" value="GatB_Yqey_C_2"/>
</dbReference>
<dbReference type="InterPro" id="IPR017958">
    <property type="entry name" value="Gln-tRNA_amidoTrfase_suB_CS"/>
</dbReference>
<dbReference type="InterPro" id="IPR014746">
    <property type="entry name" value="Gln_synth/guanido_kin_cat_dom"/>
</dbReference>
<dbReference type="NCBIfam" id="TIGR00133">
    <property type="entry name" value="gatB"/>
    <property type="match status" value="1"/>
</dbReference>
<dbReference type="NCBIfam" id="NF004012">
    <property type="entry name" value="PRK05477.1-2"/>
    <property type="match status" value="1"/>
</dbReference>
<dbReference type="PANTHER" id="PTHR11659">
    <property type="entry name" value="GLUTAMYL-TRNA GLN AMIDOTRANSFERASE SUBUNIT B MITOCHONDRIAL AND PROKARYOTIC PET112-RELATED"/>
    <property type="match status" value="1"/>
</dbReference>
<dbReference type="PANTHER" id="PTHR11659:SF0">
    <property type="entry name" value="GLUTAMYL-TRNA(GLN) AMIDOTRANSFERASE SUBUNIT B, MITOCHONDRIAL"/>
    <property type="match status" value="1"/>
</dbReference>
<dbReference type="Pfam" id="PF02934">
    <property type="entry name" value="GatB_N"/>
    <property type="match status" value="1"/>
</dbReference>
<dbReference type="Pfam" id="PF02637">
    <property type="entry name" value="GatB_Yqey"/>
    <property type="match status" value="1"/>
</dbReference>
<dbReference type="SMART" id="SM00845">
    <property type="entry name" value="GatB_Yqey"/>
    <property type="match status" value="1"/>
</dbReference>
<dbReference type="SUPFAM" id="SSF89095">
    <property type="entry name" value="GatB/YqeY motif"/>
    <property type="match status" value="1"/>
</dbReference>
<dbReference type="SUPFAM" id="SSF55931">
    <property type="entry name" value="Glutamine synthetase/guanido kinase"/>
    <property type="match status" value="1"/>
</dbReference>
<dbReference type="PROSITE" id="PS01234">
    <property type="entry name" value="GATB"/>
    <property type="match status" value="1"/>
</dbReference>
<protein>
    <recommendedName>
        <fullName evidence="1">Glutamyl-tRNA(Gln) amidotransferase subunit B, mitochondrial</fullName>
        <shortName evidence="1">Glu-AdT subunit B</shortName>
        <ecNumber evidence="1">6.3.5.-</ecNumber>
    </recommendedName>
</protein>